<proteinExistence type="inferred from homology"/>
<comment type="function">
    <text evidence="1">Key component of the proton channel; it plays a direct role in the translocation of protons across the membrane.</text>
</comment>
<comment type="subunit">
    <text evidence="1">F-type ATPases have 2 components, CF(1) - the catalytic core - and CF(0) - the membrane proton channel. CF(1) has five subunits: alpha(3), beta(3), gamma(1), delta(1), epsilon(1). CF(0) has four main subunits: a, b, b' and c.</text>
</comment>
<comment type="subcellular location">
    <subcellularLocation>
        <location evidence="1">Plastid</location>
        <location evidence="1">Chloroplast thylakoid membrane</location>
        <topology evidence="1">Multi-pass membrane protein</topology>
    </subcellularLocation>
</comment>
<comment type="similarity">
    <text evidence="1">Belongs to the ATPase A chain family.</text>
</comment>
<reference key="1">
    <citation type="journal article" date="2006" name="Mol. Genet. Genomics">
        <title>The chloroplast genome of Nicotiana sylvestris and Nicotiana tomentosiformis: complete sequencing confirms that the Nicotiana sylvestris progenitor is the maternal genome donor of Nicotiana tabacum.</title>
        <authorList>
            <person name="Yukawa M."/>
            <person name="Tsudzuki T."/>
            <person name="Sugiura M."/>
        </authorList>
    </citation>
    <scope>NUCLEOTIDE SEQUENCE [LARGE SCALE GENOMIC DNA]</scope>
</reference>
<geneLocation type="chloroplast"/>
<feature type="chain" id="PRO_0000362575" description="ATP synthase subunit a, chloroplastic">
    <location>
        <begin position="1"/>
        <end position="247"/>
    </location>
</feature>
<feature type="transmembrane region" description="Helical" evidence="1">
    <location>
        <begin position="38"/>
        <end position="58"/>
    </location>
</feature>
<feature type="transmembrane region" description="Helical" evidence="1">
    <location>
        <begin position="95"/>
        <end position="115"/>
    </location>
</feature>
<feature type="transmembrane region" description="Helical" evidence="1">
    <location>
        <begin position="134"/>
        <end position="154"/>
    </location>
</feature>
<feature type="transmembrane region" description="Helical" evidence="1">
    <location>
        <begin position="199"/>
        <end position="219"/>
    </location>
</feature>
<feature type="transmembrane region" description="Helical" evidence="1">
    <location>
        <begin position="220"/>
        <end position="240"/>
    </location>
</feature>
<protein>
    <recommendedName>
        <fullName evidence="1">ATP synthase subunit a, chloroplastic</fullName>
    </recommendedName>
    <alternativeName>
        <fullName evidence="1">ATP synthase F0 sector subunit a</fullName>
    </alternativeName>
    <alternativeName>
        <fullName evidence="1">F-ATPase subunit IV</fullName>
    </alternativeName>
</protein>
<accession>Q3C1H1</accession>
<name>ATPI_NICSY</name>
<keyword id="KW-0066">ATP synthesis</keyword>
<keyword id="KW-0138">CF(0)</keyword>
<keyword id="KW-0150">Chloroplast</keyword>
<keyword id="KW-0375">Hydrogen ion transport</keyword>
<keyword id="KW-0406">Ion transport</keyword>
<keyword id="KW-0472">Membrane</keyword>
<keyword id="KW-0934">Plastid</keyword>
<keyword id="KW-1185">Reference proteome</keyword>
<keyword id="KW-0793">Thylakoid</keyword>
<keyword id="KW-0812">Transmembrane</keyword>
<keyword id="KW-1133">Transmembrane helix</keyword>
<keyword id="KW-0813">Transport</keyword>
<gene>
    <name evidence="1" type="primary">atpI</name>
</gene>
<organism>
    <name type="scientific">Nicotiana sylvestris</name>
    <name type="common">Wood tobacco</name>
    <name type="synonym">South American tobacco</name>
    <dbReference type="NCBI Taxonomy" id="4096"/>
    <lineage>
        <taxon>Eukaryota</taxon>
        <taxon>Viridiplantae</taxon>
        <taxon>Streptophyta</taxon>
        <taxon>Embryophyta</taxon>
        <taxon>Tracheophyta</taxon>
        <taxon>Spermatophyta</taxon>
        <taxon>Magnoliopsida</taxon>
        <taxon>eudicotyledons</taxon>
        <taxon>Gunneridae</taxon>
        <taxon>Pentapetalae</taxon>
        <taxon>asterids</taxon>
        <taxon>lamiids</taxon>
        <taxon>Solanales</taxon>
        <taxon>Solanaceae</taxon>
        <taxon>Nicotianoideae</taxon>
        <taxon>Nicotianeae</taxon>
        <taxon>Nicotiana</taxon>
    </lineage>
</organism>
<dbReference type="EMBL" id="AB237912">
    <property type="protein sequence ID" value="BAE46635.1"/>
    <property type="molecule type" value="Genomic_DNA"/>
</dbReference>
<dbReference type="RefSeq" id="YP_358660.1">
    <property type="nucleotide sequence ID" value="NC_007500.1"/>
</dbReference>
<dbReference type="SMR" id="Q3C1H1"/>
<dbReference type="GeneID" id="3735054"/>
<dbReference type="KEGG" id="nsy:3735054"/>
<dbReference type="OrthoDB" id="21520at4085"/>
<dbReference type="Proteomes" id="UP000189701">
    <property type="component" value="Chloroplast Pltd"/>
</dbReference>
<dbReference type="GO" id="GO:0009535">
    <property type="term" value="C:chloroplast thylakoid membrane"/>
    <property type="evidence" value="ECO:0007669"/>
    <property type="project" value="UniProtKB-SubCell"/>
</dbReference>
<dbReference type="GO" id="GO:0005886">
    <property type="term" value="C:plasma membrane"/>
    <property type="evidence" value="ECO:0007669"/>
    <property type="project" value="UniProtKB-UniRule"/>
</dbReference>
<dbReference type="GO" id="GO:0045259">
    <property type="term" value="C:proton-transporting ATP synthase complex"/>
    <property type="evidence" value="ECO:0007669"/>
    <property type="project" value="UniProtKB-KW"/>
</dbReference>
<dbReference type="GO" id="GO:0046933">
    <property type="term" value="F:proton-transporting ATP synthase activity, rotational mechanism"/>
    <property type="evidence" value="ECO:0007669"/>
    <property type="project" value="UniProtKB-UniRule"/>
</dbReference>
<dbReference type="CDD" id="cd00310">
    <property type="entry name" value="ATP-synt_Fo_a_6"/>
    <property type="match status" value="1"/>
</dbReference>
<dbReference type="FunFam" id="1.20.120.220:FF:000001">
    <property type="entry name" value="ATP synthase subunit a, chloroplastic"/>
    <property type="match status" value="1"/>
</dbReference>
<dbReference type="Gene3D" id="1.20.120.220">
    <property type="entry name" value="ATP synthase, F0 complex, subunit A"/>
    <property type="match status" value="1"/>
</dbReference>
<dbReference type="HAMAP" id="MF_01393">
    <property type="entry name" value="ATP_synth_a_bact"/>
    <property type="match status" value="1"/>
</dbReference>
<dbReference type="InterPro" id="IPR045082">
    <property type="entry name" value="ATP_syn_F0_a_bact/chloroplast"/>
</dbReference>
<dbReference type="InterPro" id="IPR000568">
    <property type="entry name" value="ATP_synth_F0_asu"/>
</dbReference>
<dbReference type="InterPro" id="IPR023011">
    <property type="entry name" value="ATP_synth_F0_asu_AS"/>
</dbReference>
<dbReference type="InterPro" id="IPR035908">
    <property type="entry name" value="F0_ATP_A_sf"/>
</dbReference>
<dbReference type="NCBIfam" id="TIGR01131">
    <property type="entry name" value="ATP_synt_6_or_A"/>
    <property type="match status" value="1"/>
</dbReference>
<dbReference type="PANTHER" id="PTHR42823">
    <property type="entry name" value="ATP SYNTHASE SUBUNIT A, CHLOROPLASTIC"/>
    <property type="match status" value="1"/>
</dbReference>
<dbReference type="PANTHER" id="PTHR42823:SF3">
    <property type="entry name" value="ATP SYNTHASE SUBUNIT A, CHLOROPLASTIC"/>
    <property type="match status" value="1"/>
</dbReference>
<dbReference type="Pfam" id="PF00119">
    <property type="entry name" value="ATP-synt_A"/>
    <property type="match status" value="1"/>
</dbReference>
<dbReference type="PRINTS" id="PR00123">
    <property type="entry name" value="ATPASEA"/>
</dbReference>
<dbReference type="SUPFAM" id="SSF81336">
    <property type="entry name" value="F1F0 ATP synthase subunit A"/>
    <property type="match status" value="1"/>
</dbReference>
<dbReference type="PROSITE" id="PS00449">
    <property type="entry name" value="ATPASE_A"/>
    <property type="match status" value="1"/>
</dbReference>
<sequence>MNVLSCSINTLKGLYDISGVEVGQHFYWQIGGFQVHGQVLITSWVVIAILLGSATIAVRNPQTIPTGGQNFFEYVLEFIRDVSKTQIGEEYGPWVPFIGTMFLFIFVSNWSGALLPWKIIQLPHGELAAPTNDINTTVALALLTSVAYFYAGLTKKGLGYFGKYIQPTPILLPINILEDFTKPLSLSFRLFGNILADELVVVVLVSLVPLVVPIPVMLLGLFTSGIQALIFATLAAAYIGESMEGHH</sequence>
<evidence type="ECO:0000255" key="1">
    <source>
        <dbReference type="HAMAP-Rule" id="MF_01393"/>
    </source>
</evidence>